<accession>A0A166Z003</accession>
<protein>
    <recommendedName>
        <fullName evidence="4">MFS-type transporter ppzB</fullName>
    </recommendedName>
    <alternativeName>
        <fullName evidence="4">Pyrrolopyrazine biosynthesis cluster protein B</fullName>
    </alternativeName>
</protein>
<organism>
    <name type="scientific">Metarhizium rileyi (strain RCEF 4871)</name>
    <name type="common">Nomuraea rileyi</name>
    <dbReference type="NCBI Taxonomy" id="1649241"/>
    <lineage>
        <taxon>Eukaryota</taxon>
        <taxon>Fungi</taxon>
        <taxon>Dikarya</taxon>
        <taxon>Ascomycota</taxon>
        <taxon>Pezizomycotina</taxon>
        <taxon>Sordariomycetes</taxon>
        <taxon>Hypocreomycetidae</taxon>
        <taxon>Hypocreales</taxon>
        <taxon>Clavicipitaceae</taxon>
        <taxon>Metarhizium</taxon>
    </lineage>
</organism>
<sequence>MPDNHGPWGLRWRAKPSFILTTVAMGLFTDLVLYGILLPALPFTMRNRFDIPNAEIQHYTSAFLATYAGASVFFSVPAGWAASKLGSRQLFLGGLMFLVVATAIFAFSTSLVLLVVSRLLQGMSTAVVWTAGLDMVQDTVEPSQVGETIGTIFATISVGELAAPVLGGVLYERGGISAVFAVSAVLLAIDLALRALVIDKKTAVKYESPRLIRFPVERNMSDDHVASAPTVMEAQESVHEGTRLLPQVDDDGDHYKIDRELGSIVRAIPLLYCFREPRLHLAMLLSFVQALFIGTFDATVPTVAESLFHFSSLQVGLVFIALMLPYFALGRLSGQAIDRFGTKAAATSGYAFLVPCLMLLGLPEKNLVPKEANVALFCTILALNGIGLAVVTSPGYVEAIDVTTKYQVANPGHFGENGPYAQLFGFSSLYFFTGLAVGPLLGGFLRANFGNAVMGAVYAAISGVTAIVSFLFVGVRRFGPGLV</sequence>
<proteinExistence type="inferred from homology"/>
<gene>
    <name evidence="4" type="primary">ppzB</name>
    <name type="ORF">NOR_07098</name>
</gene>
<comment type="function">
    <text evidence="3 5">MFS-type transporter; part of the gene cluster that mediates the biosynthesis of pyrrolopyrazines, secondary metabolites showing insecticidal activity (PubMed:30452111). Probably involved in the secretion of peramine and other pyrrolopyrazines (Probable).</text>
</comment>
<comment type="subcellular location">
    <subcellularLocation>
        <location evidence="1">Membrane</location>
        <topology evidence="1">Multi-pass membrane protein</topology>
    </subcellularLocation>
</comment>
<comment type="similarity">
    <text evidence="5">Belongs to the major facilitator superfamily. TCR/Tet family.</text>
</comment>
<dbReference type="EMBL" id="AZHC01000030">
    <property type="protein sequence ID" value="OAA37399.1"/>
    <property type="molecule type" value="Genomic_DNA"/>
</dbReference>
<dbReference type="SMR" id="A0A166Z003"/>
<dbReference type="STRING" id="1081105.A0A166Z003"/>
<dbReference type="GlyCosmos" id="A0A166Z003">
    <property type="glycosylation" value="1 site, No reported glycans"/>
</dbReference>
<dbReference type="OMA" id="FGWCVDR"/>
<dbReference type="OrthoDB" id="5086884at2759"/>
<dbReference type="Proteomes" id="UP000243498">
    <property type="component" value="Unassembled WGS sequence"/>
</dbReference>
<dbReference type="GO" id="GO:0016020">
    <property type="term" value="C:membrane"/>
    <property type="evidence" value="ECO:0007669"/>
    <property type="project" value="UniProtKB-SubCell"/>
</dbReference>
<dbReference type="GO" id="GO:0022857">
    <property type="term" value="F:transmembrane transporter activity"/>
    <property type="evidence" value="ECO:0007669"/>
    <property type="project" value="InterPro"/>
</dbReference>
<dbReference type="CDD" id="cd17325">
    <property type="entry name" value="MFS_MdtG_SLC18_like"/>
    <property type="match status" value="1"/>
</dbReference>
<dbReference type="Gene3D" id="1.20.1250.20">
    <property type="entry name" value="MFS general substrate transporter like domains"/>
    <property type="match status" value="2"/>
</dbReference>
<dbReference type="InterPro" id="IPR011701">
    <property type="entry name" value="MFS"/>
</dbReference>
<dbReference type="InterPro" id="IPR020846">
    <property type="entry name" value="MFS_dom"/>
</dbReference>
<dbReference type="InterPro" id="IPR036259">
    <property type="entry name" value="MFS_trans_sf"/>
</dbReference>
<dbReference type="InterPro" id="IPR050930">
    <property type="entry name" value="MFS_Vesicular_Transporter"/>
</dbReference>
<dbReference type="PANTHER" id="PTHR23506">
    <property type="entry name" value="GH10249P"/>
    <property type="match status" value="1"/>
</dbReference>
<dbReference type="PANTHER" id="PTHR23506:SF37">
    <property type="entry name" value="MAJOR FACILITATOR SUPERFAMILY (MFS) PROFILE DOMAIN-CONTAINING PROTEIN"/>
    <property type="match status" value="1"/>
</dbReference>
<dbReference type="Pfam" id="PF07690">
    <property type="entry name" value="MFS_1"/>
    <property type="match status" value="2"/>
</dbReference>
<dbReference type="SUPFAM" id="SSF103473">
    <property type="entry name" value="MFS general substrate transporter"/>
    <property type="match status" value="1"/>
</dbReference>
<dbReference type="PROSITE" id="PS50850">
    <property type="entry name" value="MFS"/>
    <property type="match status" value="1"/>
</dbReference>
<reference key="1">
    <citation type="journal article" date="2016" name="Genome Biol. Evol.">
        <title>Divergent and convergent evolution of fungal pathogenicity.</title>
        <authorList>
            <person name="Shang Y."/>
            <person name="Xiao G."/>
            <person name="Zheng P."/>
            <person name="Cen K."/>
            <person name="Zhan S."/>
            <person name="Wang C."/>
        </authorList>
    </citation>
    <scope>NUCLEOTIDE SEQUENCE [LARGE SCALE GENOMIC DNA]</scope>
    <source>
        <strain>RCEF 4871</strain>
    </source>
</reference>
<reference key="2">
    <citation type="journal article" date="2019" name="Environ. Microbiol.">
        <title>Orthologous peramine and pyrrolopyrazine-producing biosynthetic gene clusters in Metarhizium rileyi, Metarhizium majus and Cladonia grayi.</title>
        <authorList>
            <person name="Berry D."/>
            <person name="Mace W."/>
            <person name="Rehner S.A."/>
            <person name="Grage K."/>
            <person name="Dijkwel P.P."/>
            <person name="Young C.A."/>
            <person name="Scott B."/>
        </authorList>
    </citation>
    <scope>FUNCTION</scope>
    <scope>PATHWAY</scope>
</reference>
<evidence type="ECO:0000255" key="1"/>
<evidence type="ECO:0000255" key="2">
    <source>
        <dbReference type="PROSITE-ProRule" id="PRU00498"/>
    </source>
</evidence>
<evidence type="ECO:0000269" key="3">
    <source>
    </source>
</evidence>
<evidence type="ECO:0000303" key="4">
    <source>
    </source>
</evidence>
<evidence type="ECO:0000305" key="5"/>
<name>PPZB_METRR</name>
<keyword id="KW-0325">Glycoprotein</keyword>
<keyword id="KW-0472">Membrane</keyword>
<keyword id="KW-1185">Reference proteome</keyword>
<keyword id="KW-0812">Transmembrane</keyword>
<keyword id="KW-1133">Transmembrane helix</keyword>
<keyword id="KW-0813">Transport</keyword>
<feature type="chain" id="PRO_0000450256" description="MFS-type transporter ppzB">
    <location>
        <begin position="1"/>
        <end position="483"/>
    </location>
</feature>
<feature type="transmembrane region" description="Helical" evidence="1">
    <location>
        <begin position="18"/>
        <end position="38"/>
    </location>
</feature>
<feature type="transmembrane region" description="Helical" evidence="1">
    <location>
        <begin position="62"/>
        <end position="82"/>
    </location>
</feature>
<feature type="transmembrane region" description="Helical" evidence="1">
    <location>
        <begin position="96"/>
        <end position="116"/>
    </location>
</feature>
<feature type="transmembrane region" description="Helical" evidence="1">
    <location>
        <begin position="149"/>
        <end position="169"/>
    </location>
</feature>
<feature type="transmembrane region" description="Helical" evidence="1">
    <location>
        <begin position="178"/>
        <end position="198"/>
    </location>
</feature>
<feature type="transmembrane region" description="Helical" evidence="1">
    <location>
        <begin position="281"/>
        <end position="301"/>
    </location>
</feature>
<feature type="transmembrane region" description="Helical" evidence="1">
    <location>
        <begin position="310"/>
        <end position="330"/>
    </location>
</feature>
<feature type="transmembrane region" description="Helical" evidence="1">
    <location>
        <begin position="344"/>
        <end position="364"/>
    </location>
</feature>
<feature type="transmembrane region" description="Helical" evidence="1">
    <location>
        <begin position="374"/>
        <end position="394"/>
    </location>
</feature>
<feature type="transmembrane region" description="Helical" evidence="1">
    <location>
        <begin position="424"/>
        <end position="444"/>
    </location>
</feature>
<feature type="transmembrane region" description="Helical" evidence="1">
    <location>
        <begin position="453"/>
        <end position="473"/>
    </location>
</feature>
<feature type="glycosylation site" description="N-linked (GlcNAc...) asparagine" evidence="2">
    <location>
        <position position="219"/>
    </location>
</feature>